<reference key="1">
    <citation type="journal article" date="2009" name="PLoS Genet.">
        <title>Organised genome dynamics in the Escherichia coli species results in highly diverse adaptive paths.</title>
        <authorList>
            <person name="Touchon M."/>
            <person name="Hoede C."/>
            <person name="Tenaillon O."/>
            <person name="Barbe V."/>
            <person name="Baeriswyl S."/>
            <person name="Bidet P."/>
            <person name="Bingen E."/>
            <person name="Bonacorsi S."/>
            <person name="Bouchier C."/>
            <person name="Bouvet O."/>
            <person name="Calteau A."/>
            <person name="Chiapello H."/>
            <person name="Clermont O."/>
            <person name="Cruveiller S."/>
            <person name="Danchin A."/>
            <person name="Diard M."/>
            <person name="Dossat C."/>
            <person name="Karoui M.E."/>
            <person name="Frapy E."/>
            <person name="Garry L."/>
            <person name="Ghigo J.M."/>
            <person name="Gilles A.M."/>
            <person name="Johnson J."/>
            <person name="Le Bouguenec C."/>
            <person name="Lescat M."/>
            <person name="Mangenot S."/>
            <person name="Martinez-Jehanne V."/>
            <person name="Matic I."/>
            <person name="Nassif X."/>
            <person name="Oztas S."/>
            <person name="Petit M.A."/>
            <person name="Pichon C."/>
            <person name="Rouy Z."/>
            <person name="Ruf C.S."/>
            <person name="Schneider D."/>
            <person name="Tourret J."/>
            <person name="Vacherie B."/>
            <person name="Vallenet D."/>
            <person name="Medigue C."/>
            <person name="Rocha E.P.C."/>
            <person name="Denamur E."/>
        </authorList>
    </citation>
    <scope>NUCLEOTIDE SEQUENCE [LARGE SCALE GENOMIC DNA]</scope>
    <source>
        <strain>ATCC 35469 / DSM 13698 / BCRC 15582 / CCUG 18766 / IAM 14443 / JCM 21226 / LMG 7866 / NBRC 102419 / NCTC 12128 / CDC 0568-73</strain>
    </source>
</reference>
<sequence>MRHPLVMGNWKLNGSRHMVHELVSNLRKELAGVAGCAVAIAPPEMYIDMAKREAEGSHIMLGAQNVDLNLSGAFTGETSAAMLKDIGAQYIIIGHSERRTYHKESDELIAKKFAVLKEQGLTPVLCIGETEAENEAGKTEEVCARQIDAVLKTQGAAAFEGAVIAYEPVWAIGTGKSATPAQAQAVHKFIRDHIAKVDANIAEQVIIQYGGSVNASNAAELFAQPDIDGALVGGASLKADAFAVIVKAAEAAKQA</sequence>
<accession>B7LVC6</accession>
<comment type="function">
    <text evidence="1">Involved in the gluconeogenesis. Catalyzes stereospecifically the conversion of dihydroxyacetone phosphate (DHAP) to D-glyceraldehyde-3-phosphate (G3P).</text>
</comment>
<comment type="catalytic activity">
    <reaction evidence="1">
        <text>D-glyceraldehyde 3-phosphate = dihydroxyacetone phosphate</text>
        <dbReference type="Rhea" id="RHEA:18585"/>
        <dbReference type="ChEBI" id="CHEBI:57642"/>
        <dbReference type="ChEBI" id="CHEBI:59776"/>
        <dbReference type="EC" id="5.3.1.1"/>
    </reaction>
</comment>
<comment type="pathway">
    <text evidence="1">Carbohydrate biosynthesis; gluconeogenesis.</text>
</comment>
<comment type="pathway">
    <text evidence="1">Carbohydrate degradation; glycolysis; D-glyceraldehyde 3-phosphate from glycerone phosphate: step 1/1.</text>
</comment>
<comment type="subunit">
    <text evidence="1">Homodimer.</text>
</comment>
<comment type="subcellular location">
    <subcellularLocation>
        <location evidence="1">Cytoplasm</location>
    </subcellularLocation>
</comment>
<comment type="similarity">
    <text evidence="1">Belongs to the triosephosphate isomerase family.</text>
</comment>
<dbReference type="EC" id="5.3.1.1" evidence="1"/>
<dbReference type="EMBL" id="CU928158">
    <property type="protein sequence ID" value="CAQ91289.1"/>
    <property type="molecule type" value="Genomic_DNA"/>
</dbReference>
<dbReference type="RefSeq" id="WP_001216325.1">
    <property type="nucleotide sequence ID" value="NC_011740.1"/>
</dbReference>
<dbReference type="SMR" id="B7LVC6"/>
<dbReference type="GeneID" id="93777979"/>
<dbReference type="KEGG" id="efe:EFER_3854"/>
<dbReference type="HOGENOM" id="CLU_024251_2_1_6"/>
<dbReference type="OrthoDB" id="9809429at2"/>
<dbReference type="UniPathway" id="UPA00109">
    <property type="reaction ID" value="UER00189"/>
</dbReference>
<dbReference type="UniPathway" id="UPA00138"/>
<dbReference type="Proteomes" id="UP000000745">
    <property type="component" value="Chromosome"/>
</dbReference>
<dbReference type="GO" id="GO:0005829">
    <property type="term" value="C:cytosol"/>
    <property type="evidence" value="ECO:0007669"/>
    <property type="project" value="TreeGrafter"/>
</dbReference>
<dbReference type="GO" id="GO:0004807">
    <property type="term" value="F:triose-phosphate isomerase activity"/>
    <property type="evidence" value="ECO:0007669"/>
    <property type="project" value="UniProtKB-UniRule"/>
</dbReference>
<dbReference type="GO" id="GO:0006094">
    <property type="term" value="P:gluconeogenesis"/>
    <property type="evidence" value="ECO:0007669"/>
    <property type="project" value="UniProtKB-UniRule"/>
</dbReference>
<dbReference type="GO" id="GO:0046166">
    <property type="term" value="P:glyceraldehyde-3-phosphate biosynthetic process"/>
    <property type="evidence" value="ECO:0007669"/>
    <property type="project" value="TreeGrafter"/>
</dbReference>
<dbReference type="GO" id="GO:0019563">
    <property type="term" value="P:glycerol catabolic process"/>
    <property type="evidence" value="ECO:0007669"/>
    <property type="project" value="TreeGrafter"/>
</dbReference>
<dbReference type="GO" id="GO:0006096">
    <property type="term" value="P:glycolytic process"/>
    <property type="evidence" value="ECO:0007669"/>
    <property type="project" value="UniProtKB-UniRule"/>
</dbReference>
<dbReference type="CDD" id="cd00311">
    <property type="entry name" value="TIM"/>
    <property type="match status" value="1"/>
</dbReference>
<dbReference type="FunFam" id="3.20.20.70:FF:000020">
    <property type="entry name" value="Triosephosphate isomerase"/>
    <property type="match status" value="1"/>
</dbReference>
<dbReference type="Gene3D" id="3.20.20.70">
    <property type="entry name" value="Aldolase class I"/>
    <property type="match status" value="1"/>
</dbReference>
<dbReference type="HAMAP" id="MF_00147_B">
    <property type="entry name" value="TIM_B"/>
    <property type="match status" value="1"/>
</dbReference>
<dbReference type="InterPro" id="IPR013785">
    <property type="entry name" value="Aldolase_TIM"/>
</dbReference>
<dbReference type="InterPro" id="IPR035990">
    <property type="entry name" value="TIM_sf"/>
</dbReference>
<dbReference type="InterPro" id="IPR022896">
    <property type="entry name" value="TrioseP_Isoase_bac/euk"/>
</dbReference>
<dbReference type="InterPro" id="IPR000652">
    <property type="entry name" value="Triosephosphate_isomerase"/>
</dbReference>
<dbReference type="InterPro" id="IPR020861">
    <property type="entry name" value="Triosephosphate_isomerase_AS"/>
</dbReference>
<dbReference type="NCBIfam" id="TIGR00419">
    <property type="entry name" value="tim"/>
    <property type="match status" value="1"/>
</dbReference>
<dbReference type="PANTHER" id="PTHR21139">
    <property type="entry name" value="TRIOSEPHOSPHATE ISOMERASE"/>
    <property type="match status" value="1"/>
</dbReference>
<dbReference type="PANTHER" id="PTHR21139:SF42">
    <property type="entry name" value="TRIOSEPHOSPHATE ISOMERASE"/>
    <property type="match status" value="1"/>
</dbReference>
<dbReference type="Pfam" id="PF00121">
    <property type="entry name" value="TIM"/>
    <property type="match status" value="1"/>
</dbReference>
<dbReference type="SUPFAM" id="SSF51351">
    <property type="entry name" value="Triosephosphate isomerase (TIM)"/>
    <property type="match status" value="1"/>
</dbReference>
<dbReference type="PROSITE" id="PS00171">
    <property type="entry name" value="TIM_1"/>
    <property type="match status" value="1"/>
</dbReference>
<dbReference type="PROSITE" id="PS51440">
    <property type="entry name" value="TIM_2"/>
    <property type="match status" value="1"/>
</dbReference>
<evidence type="ECO:0000255" key="1">
    <source>
        <dbReference type="HAMAP-Rule" id="MF_00147"/>
    </source>
</evidence>
<feature type="chain" id="PRO_1000196985" description="Triosephosphate isomerase">
    <location>
        <begin position="1"/>
        <end position="255"/>
    </location>
</feature>
<feature type="active site" description="Electrophile" evidence="1">
    <location>
        <position position="95"/>
    </location>
</feature>
<feature type="active site" description="Proton acceptor" evidence="1">
    <location>
        <position position="167"/>
    </location>
</feature>
<feature type="binding site" evidence="1">
    <location>
        <begin position="9"/>
        <end position="11"/>
    </location>
    <ligand>
        <name>substrate</name>
    </ligand>
</feature>
<feature type="binding site" evidence="1">
    <location>
        <position position="173"/>
    </location>
    <ligand>
        <name>substrate</name>
    </ligand>
</feature>
<feature type="binding site" evidence="1">
    <location>
        <position position="212"/>
    </location>
    <ligand>
        <name>substrate</name>
    </ligand>
</feature>
<feature type="binding site" evidence="1">
    <location>
        <begin position="233"/>
        <end position="234"/>
    </location>
    <ligand>
        <name>substrate</name>
    </ligand>
</feature>
<gene>
    <name evidence="1" type="primary">tpiA</name>
    <name type="ordered locus">EFER_3854</name>
</gene>
<keyword id="KW-0963">Cytoplasm</keyword>
<keyword id="KW-0312">Gluconeogenesis</keyword>
<keyword id="KW-0324">Glycolysis</keyword>
<keyword id="KW-0413">Isomerase</keyword>
<organism>
    <name type="scientific">Escherichia fergusonii (strain ATCC 35469 / DSM 13698 / CCUG 18766 / IAM 14443 / JCM 21226 / LMG 7866 / NBRC 102419 / NCTC 12128 / CDC 0568-73)</name>
    <dbReference type="NCBI Taxonomy" id="585054"/>
    <lineage>
        <taxon>Bacteria</taxon>
        <taxon>Pseudomonadati</taxon>
        <taxon>Pseudomonadota</taxon>
        <taxon>Gammaproteobacteria</taxon>
        <taxon>Enterobacterales</taxon>
        <taxon>Enterobacteriaceae</taxon>
        <taxon>Escherichia</taxon>
    </lineage>
</organism>
<proteinExistence type="inferred from homology"/>
<name>TPIS_ESCF3</name>
<protein>
    <recommendedName>
        <fullName evidence="1">Triosephosphate isomerase</fullName>
        <shortName evidence="1">TIM</shortName>
        <shortName evidence="1">TPI</shortName>
        <ecNumber evidence="1">5.3.1.1</ecNumber>
    </recommendedName>
    <alternativeName>
        <fullName evidence="1">Triose-phosphate isomerase</fullName>
    </alternativeName>
</protein>